<proteinExistence type="evidence at protein level"/>
<accession>P06750</accession>
<sequence length="564" mass="62851">MYAVATWLCFGSTSGWSFTLEDNNIFPKQYPIINFTTADATVESYTNFIRAVRSHLTTGADVRHEIPVLPNRVGLPISQRFILVELSNHAELSVTLALDVTNAYVVGCRAGNSAYFFHPDNQEDAEAITHLFTDVQNSFTFAFGGNYDRLEQLGGLRENIELGTGPLEDAISALYYYSTCGTQIPTLARSFMVCIQMISEAARFQYIEGEMRTRIRYNRRSAPDPSVITLENSWGRLSTAIQESNQGAFASPIQLQRRNGSKFNVYDVSILIPIIALMVYRCAPPPSSQFSLLIRPVVPNFNADVCMDPEPIVRIVGRNGLCVDVTGEEFFDGNPIQLWPCKSNTDWNQLWTLRKDSTIRSNGKCLTISKSSPRQQVVIYNCSTATVGATRWQIWDNRTIINPRSGLVLAATSGNSGTKLTVQTNIYAVSQGWLPTNNTQPFVTTIVGLYGMCLQANSGKVWLEDCTSEKAEQQWALYADGSIRPQQNRDNCLTTDANIKGTVVKILSCGPASSGQRWMFKNDGTILNLYNGLVLDVRRSDPSLKQIIVHPFHGNLNQIWLPLF</sequence>
<feature type="signal peptide" evidence="3">
    <location>
        <begin position="1"/>
        <end position="24"/>
    </location>
</feature>
<feature type="chain" id="PRO_0000030726" description="Agglutinin A chain">
    <location>
        <begin position="25"/>
        <end position="290"/>
    </location>
</feature>
<feature type="propeptide" id="PRO_0000030727" description="Linker peptide" evidence="6 7">
    <location>
        <begin position="291"/>
        <end position="302"/>
    </location>
</feature>
<feature type="chain" id="PRO_0000030728" description="Agglutinin B chain" evidence="5">
    <location>
        <begin position="303"/>
        <end position="564"/>
    </location>
</feature>
<feature type="domain" description="Ricin B-type lectin 1" evidence="4">
    <location>
        <begin position="309"/>
        <end position="436"/>
    </location>
</feature>
<feature type="repeat" description="1-alpha">
    <location>
        <begin position="319"/>
        <end position="361"/>
    </location>
</feature>
<feature type="repeat" description="1-beta">
    <location>
        <begin position="362"/>
        <end position="402"/>
    </location>
</feature>
<feature type="repeat" description="1-gamma">
    <location>
        <begin position="405"/>
        <end position="437"/>
    </location>
</feature>
<feature type="domain" description="Ricin B-type lectin 2" evidence="4">
    <location>
        <begin position="439"/>
        <end position="563"/>
    </location>
</feature>
<feature type="repeat" description="2-alpha">
    <location>
        <begin position="450"/>
        <end position="485"/>
    </location>
</feature>
<feature type="repeat" description="2-beta">
    <location>
        <begin position="489"/>
        <end position="528"/>
    </location>
</feature>
<feature type="repeat" description="2-gamma">
    <location>
        <begin position="531"/>
        <end position="558"/>
    </location>
</feature>
<feature type="active site" evidence="2">
    <location>
        <position position="104"/>
    </location>
</feature>
<feature type="active site" evidence="2">
    <location>
        <position position="147"/>
    </location>
</feature>
<feature type="active site" evidence="2">
    <location>
        <position position="200"/>
    </location>
</feature>
<feature type="active site" evidence="2">
    <location>
        <position position="203"/>
    </location>
</feature>
<feature type="binding site" evidence="8 10">
    <location>
        <begin position="32"/>
        <end position="34"/>
    </location>
    <ligand>
        <name>beta-D-galactose</name>
        <dbReference type="ChEBI" id="CHEBI:27667"/>
        <label>1</label>
    </ligand>
</feature>
<feature type="binding site" evidence="1">
    <location>
        <begin position="104"/>
        <end position="105"/>
    </location>
    <ligand>
        <name>AMP</name>
        <dbReference type="ChEBI" id="CHEBI:456215"/>
    </ligand>
</feature>
<feature type="binding site" evidence="1">
    <location>
        <begin position="145"/>
        <end position="147"/>
    </location>
    <ligand>
        <name>AMP</name>
        <dbReference type="ChEBI" id="CHEBI:456215"/>
    </ligand>
</feature>
<feature type="binding site" evidence="8 10">
    <location>
        <position position="312"/>
    </location>
    <ligand>
        <name>beta-D-galactose</name>
        <dbReference type="ChEBI" id="CHEBI:27667"/>
        <label>3</label>
    </ligand>
</feature>
<feature type="binding site" evidence="8 10">
    <location>
        <begin position="324"/>
        <end position="328"/>
    </location>
    <ligand>
        <name>beta-D-galactose</name>
        <dbReference type="ChEBI" id="CHEBI:27667"/>
        <label>2</label>
    </ligand>
</feature>
<feature type="binding site" evidence="8 10">
    <location>
        <position position="337"/>
    </location>
    <ligand>
        <name>beta-D-galactose</name>
        <dbReference type="ChEBI" id="CHEBI:27667"/>
        <label>2</label>
    </ligand>
</feature>
<feature type="binding site" evidence="8 10">
    <location>
        <position position="342"/>
    </location>
    <ligand>
        <name>beta-D-galactose</name>
        <dbReference type="ChEBI" id="CHEBI:27667"/>
        <label>2</label>
    </ligand>
</feature>
<feature type="binding site" evidence="8 10">
    <location>
        <position position="348"/>
    </location>
    <ligand>
        <name>beta-D-galactose</name>
        <dbReference type="ChEBI" id="CHEBI:27667"/>
        <label>2</label>
    </ligand>
</feature>
<feature type="binding site" evidence="8 10">
    <location>
        <position position="437"/>
    </location>
    <ligand>
        <name>beta-D-galactose</name>
        <dbReference type="ChEBI" id="CHEBI:27667"/>
        <label>3</label>
    </ligand>
</feature>
<feature type="glycosylation site" description="N-linked (GlcNAc...) asparagine" evidence="3">
    <location>
        <position position="34"/>
    </location>
</feature>
<feature type="glycosylation site" description="N-linked (GlcNAc...) asparagine" evidence="3">
    <location>
        <position position="259"/>
    </location>
</feature>
<feature type="glycosylation site" description="N-linked (GlcNAc...) asparagine">
    <location>
        <position position="397"/>
    </location>
</feature>
<feature type="glycosylation site" description="N-linked (GlcNAc...) asparagine">
    <location>
        <position position="437"/>
    </location>
</feature>
<feature type="disulfide bond" description="Interchain (between A and B chains)" evidence="4 8">
    <location>
        <begin position="282"/>
        <end position="306"/>
    </location>
</feature>
<feature type="disulfide bond" evidence="4 8">
    <location>
        <begin position="322"/>
        <end position="341"/>
    </location>
</feature>
<feature type="disulfide bond" evidence="4 8">
    <location>
        <begin position="365"/>
        <end position="382"/>
    </location>
</feature>
<feature type="disulfide bond" evidence="4 8">
    <location>
        <begin position="453"/>
        <end position="466"/>
    </location>
</feature>
<feature type="disulfide bond" evidence="4 8">
    <location>
        <begin position="492"/>
        <end position="509"/>
    </location>
</feature>
<feature type="sequence conflict" description="In Ref. 2; AA sequence." evidence="9" ref="2">
    <original>F</original>
    <variation>T</variation>
    <location>
        <position position="331"/>
    </location>
</feature>
<feature type="sequence conflict" description="In Ref. 2; AA sequence." evidence="9" ref="2">
    <original>N</original>
    <variation>D</variation>
    <location>
        <position position="362"/>
    </location>
</feature>
<feature type="sequence conflict" description="In Ref. 2; AA sequence." evidence="9" ref="2">
    <original>R</original>
    <variation>G</variation>
    <location>
        <position position="374"/>
    </location>
</feature>
<feature type="sequence conflict" description="In Ref. 2; AA sequence." evidence="9" ref="2">
    <original>R</original>
    <variation>T</variation>
    <location>
        <position position="404"/>
    </location>
</feature>
<feature type="sequence conflict" description="In Ref. 2; AA sequence." evidence="9" ref="2">
    <original>F</original>
    <variation>V</variation>
    <location>
        <position position="552"/>
    </location>
</feature>
<feature type="strand" evidence="11">
    <location>
        <begin position="32"/>
        <end position="36"/>
    </location>
</feature>
<feature type="helix" evidence="11">
    <location>
        <begin position="42"/>
        <end position="56"/>
    </location>
</feature>
<feature type="strand" evidence="11">
    <location>
        <begin position="66"/>
        <end position="68"/>
    </location>
</feature>
<feature type="helix" evidence="11">
    <location>
        <begin position="77"/>
        <end position="79"/>
    </location>
</feature>
<feature type="strand" evidence="11">
    <location>
        <begin position="80"/>
        <end position="87"/>
    </location>
</feature>
<feature type="strand" evidence="11">
    <location>
        <begin position="93"/>
        <end position="99"/>
    </location>
</feature>
<feature type="turn" evidence="11">
    <location>
        <begin position="100"/>
        <end position="102"/>
    </location>
</feature>
<feature type="strand" evidence="11">
    <location>
        <begin position="105"/>
        <end position="109"/>
    </location>
</feature>
<feature type="strand" evidence="11">
    <location>
        <begin position="111"/>
        <end position="116"/>
    </location>
</feature>
<feature type="helix" evidence="11">
    <location>
        <begin position="122"/>
        <end position="127"/>
    </location>
</feature>
<feature type="helix" evidence="11">
    <location>
        <begin position="128"/>
        <end position="130"/>
    </location>
</feature>
<feature type="strand" evidence="11">
    <location>
        <begin position="137"/>
        <end position="143"/>
    </location>
</feature>
<feature type="helix" evidence="11">
    <location>
        <begin position="147"/>
        <end position="154"/>
    </location>
</feature>
<feature type="helix" evidence="11">
    <location>
        <begin position="157"/>
        <end position="159"/>
    </location>
</feature>
<feature type="helix" evidence="11">
    <location>
        <begin position="164"/>
        <end position="176"/>
    </location>
</feature>
<feature type="helix" evidence="11">
    <location>
        <begin position="177"/>
        <end position="179"/>
    </location>
</feature>
<feature type="helix" evidence="11">
    <location>
        <begin position="184"/>
        <end position="203"/>
    </location>
</feature>
<feature type="helix" evidence="11">
    <location>
        <begin position="205"/>
        <end position="217"/>
    </location>
</feature>
<feature type="helix" evidence="11">
    <location>
        <begin position="225"/>
        <end position="242"/>
    </location>
</feature>
<feature type="strand" evidence="11">
    <location>
        <begin position="245"/>
        <end position="256"/>
    </location>
</feature>
<feature type="strand" evidence="11">
    <location>
        <begin position="262"/>
        <end position="268"/>
    </location>
</feature>
<feature type="helix" evidence="11">
    <location>
        <begin position="269"/>
        <end position="271"/>
    </location>
</feature>
<feature type="turn" evidence="11">
    <location>
        <begin position="272"/>
        <end position="274"/>
    </location>
</feature>
<feature type="helix" evidence="11">
    <location>
        <begin position="318"/>
        <end position="320"/>
    </location>
</feature>
<feature type="strand" evidence="11">
    <location>
        <begin position="321"/>
        <end position="325"/>
    </location>
</feature>
<feature type="helix" evidence="11">
    <location>
        <begin position="326"/>
        <end position="328"/>
    </location>
</feature>
<feature type="strand" evidence="11">
    <location>
        <begin position="335"/>
        <end position="340"/>
    </location>
</feature>
<feature type="helix" evidence="11">
    <location>
        <begin position="347"/>
        <end position="349"/>
    </location>
</feature>
<feature type="strand" evidence="11">
    <location>
        <begin position="364"/>
        <end position="369"/>
    </location>
</feature>
<feature type="strand" evidence="11">
    <location>
        <begin position="376"/>
        <end position="381"/>
    </location>
</feature>
<feature type="turn" evidence="11">
    <location>
        <begin position="382"/>
        <end position="384"/>
    </location>
</feature>
<feature type="helix" evidence="11">
    <location>
        <begin position="387"/>
        <end position="389"/>
    </location>
</feature>
<feature type="strand" evidence="11">
    <location>
        <begin position="398"/>
        <end position="402"/>
    </location>
</feature>
<feature type="turn" evidence="11">
    <location>
        <begin position="403"/>
        <end position="406"/>
    </location>
</feature>
<feature type="strand" evidence="11">
    <location>
        <begin position="407"/>
        <end position="410"/>
    </location>
</feature>
<feature type="strand" evidence="11">
    <location>
        <begin position="421"/>
        <end position="424"/>
    </location>
</feature>
<feature type="helix" evidence="11">
    <location>
        <begin position="429"/>
        <end position="431"/>
    </location>
</feature>
<feature type="strand" evidence="11">
    <location>
        <begin position="442"/>
        <end position="447"/>
    </location>
</feature>
<feature type="helix" evidence="11">
    <location>
        <begin position="449"/>
        <end position="451"/>
    </location>
</feature>
<feature type="strand" evidence="11">
    <location>
        <begin position="452"/>
        <end position="457"/>
    </location>
</feature>
<feature type="strand" evidence="11">
    <location>
        <begin position="460"/>
        <end position="465"/>
    </location>
</feature>
<feature type="helix" evidence="11">
    <location>
        <begin position="471"/>
        <end position="473"/>
    </location>
</feature>
<feature type="strand" evidence="11">
    <location>
        <begin position="475"/>
        <end position="477"/>
    </location>
</feature>
<feature type="strand" evidence="11">
    <location>
        <begin position="481"/>
        <end position="485"/>
    </location>
</feature>
<feature type="strand" evidence="11">
    <location>
        <begin position="491"/>
        <end position="494"/>
    </location>
</feature>
<feature type="strand" evidence="11">
    <location>
        <begin position="505"/>
        <end position="509"/>
    </location>
</feature>
<feature type="turn" evidence="11">
    <location>
        <begin position="529"/>
        <end position="531"/>
    </location>
</feature>
<feature type="strand" evidence="11">
    <location>
        <begin position="534"/>
        <end position="537"/>
    </location>
</feature>
<feature type="helix" evidence="11">
    <location>
        <begin position="538"/>
        <end position="540"/>
    </location>
</feature>
<feature type="strand" evidence="11">
    <location>
        <begin position="547"/>
        <end position="550"/>
    </location>
</feature>
<feature type="helix" evidence="11">
    <location>
        <begin position="556"/>
        <end position="558"/>
    </location>
</feature>
<feature type="strand" evidence="11">
    <location>
        <begin position="561"/>
        <end position="563"/>
    </location>
</feature>
<protein>
    <recommendedName>
        <fullName>Agglutinin</fullName>
    </recommendedName>
    <alternativeName>
        <fullName>RCA</fullName>
    </alternativeName>
    <component>
        <recommendedName>
            <fullName>Agglutinin A chain</fullName>
            <ecNumber>3.2.2.22</ecNumber>
        </recommendedName>
        <alternativeName>
            <fullName>rRNA N-glycosidase</fullName>
        </alternativeName>
    </component>
    <component>
        <recommendedName>
            <fullName>Agglutinin B chain</fullName>
        </recommendedName>
    </component>
</protein>
<organism>
    <name type="scientific">Ricinus communis</name>
    <name type="common">Castor bean</name>
    <dbReference type="NCBI Taxonomy" id="3988"/>
    <lineage>
        <taxon>Eukaryota</taxon>
        <taxon>Viridiplantae</taxon>
        <taxon>Streptophyta</taxon>
        <taxon>Embryophyta</taxon>
        <taxon>Tracheophyta</taxon>
        <taxon>Spermatophyta</taxon>
        <taxon>Magnoliopsida</taxon>
        <taxon>eudicotyledons</taxon>
        <taxon>Gunneridae</taxon>
        <taxon>Pentapetalae</taxon>
        <taxon>rosids</taxon>
        <taxon>fabids</taxon>
        <taxon>Malpighiales</taxon>
        <taxon>Euphorbiaceae</taxon>
        <taxon>Acalyphoideae</taxon>
        <taxon>Acalypheae</taxon>
        <taxon>Ricinus</taxon>
    </lineage>
</organism>
<keyword id="KW-0002">3D-structure</keyword>
<keyword id="KW-0903">Direct protein sequencing</keyword>
<keyword id="KW-1015">Disulfide bond</keyword>
<keyword id="KW-0325">Glycoprotein</keyword>
<keyword id="KW-0378">Hydrolase</keyword>
<keyword id="KW-0430">Lectin</keyword>
<keyword id="KW-0547">Nucleotide-binding</keyword>
<keyword id="KW-0611">Plant defense</keyword>
<keyword id="KW-0652">Protein synthesis inhibitor</keyword>
<keyword id="KW-0677">Repeat</keyword>
<keyword id="KW-0732">Signal</keyword>
<keyword id="KW-0800">Toxin</keyword>
<name>AGGL_RICCO</name>
<evidence type="ECO:0000250" key="1"/>
<evidence type="ECO:0000250" key="2">
    <source>
        <dbReference type="UniProtKB" id="P84531"/>
    </source>
</evidence>
<evidence type="ECO:0000255" key="3"/>
<evidence type="ECO:0000255" key="4">
    <source>
        <dbReference type="PROSITE-ProRule" id="PRU00174"/>
    </source>
</evidence>
<evidence type="ECO:0000269" key="5">
    <source>
    </source>
</evidence>
<evidence type="ECO:0000269" key="6">
    <source>
    </source>
</evidence>
<evidence type="ECO:0000269" key="7">
    <source ref="2"/>
</evidence>
<evidence type="ECO:0000269" key="8">
    <source ref="4"/>
</evidence>
<evidence type="ECO:0000305" key="9"/>
<evidence type="ECO:0007744" key="10">
    <source>
        <dbReference type="PDB" id="1RZO"/>
    </source>
</evidence>
<evidence type="ECO:0007829" key="11">
    <source>
        <dbReference type="PDB" id="1RZO"/>
    </source>
</evidence>
<comment type="catalytic activity">
    <reaction>
        <text>Endohydrolysis of the N-glycosidic bond at one specific adenosine on the 28S rRNA.</text>
        <dbReference type="EC" id="3.2.2.22"/>
    </reaction>
</comment>
<comment type="similarity">
    <text evidence="9">In the N-terminal section; belongs to the ribosome-inactivating protein family. Type 2 RIP subfamily.</text>
</comment>
<comment type="online information" name="Functional Glycomics Gateway - Glycan Binding">
    <link uri="https://www.functionalglycomics.org/glycan-array/1000722"/>
    <text>RCA</text>
</comment>
<dbReference type="EC" id="3.2.2.22"/>
<dbReference type="EMBL" id="M12089">
    <property type="protein sequence ID" value="AAA33869.1"/>
    <property type="molecule type" value="mRNA"/>
</dbReference>
<dbReference type="EMBL" id="S40368">
    <property type="protein sequence ID" value="AAB22584.1"/>
    <property type="molecule type" value="mRNA"/>
</dbReference>
<dbReference type="PIR" id="A24261">
    <property type="entry name" value="RLCSAG"/>
</dbReference>
<dbReference type="PDB" id="1RZO">
    <property type="method" value="X-ray"/>
    <property type="resolution" value="2.63 A"/>
    <property type="chains" value="A/C=25-286, B/D=303-564"/>
</dbReference>
<dbReference type="PDBsum" id="1RZO"/>
<dbReference type="SMR" id="P06750"/>
<dbReference type="CAZy" id="CBM13">
    <property type="family name" value="Carbohydrate-Binding Module Family 13"/>
</dbReference>
<dbReference type="UniLectin" id="P06750"/>
<dbReference type="GlyConnect" id="10">
    <property type="glycosylation" value="3 N-Linked glycans"/>
</dbReference>
<dbReference type="eggNOG" id="ENOG502QUVN">
    <property type="taxonomic scope" value="Eukaryota"/>
</dbReference>
<dbReference type="EvolutionaryTrace" id="P06750"/>
<dbReference type="GO" id="GO:0005783">
    <property type="term" value="C:endoplasmic reticulum"/>
    <property type="evidence" value="ECO:0000314"/>
    <property type="project" value="UniProtKB"/>
</dbReference>
<dbReference type="GO" id="GO:0030246">
    <property type="term" value="F:carbohydrate binding"/>
    <property type="evidence" value="ECO:0007669"/>
    <property type="project" value="UniProtKB-KW"/>
</dbReference>
<dbReference type="GO" id="GO:0000166">
    <property type="term" value="F:nucleotide binding"/>
    <property type="evidence" value="ECO:0007669"/>
    <property type="project" value="UniProtKB-KW"/>
</dbReference>
<dbReference type="GO" id="GO:0030598">
    <property type="term" value="F:rRNA N-glycosylase activity"/>
    <property type="evidence" value="ECO:0007669"/>
    <property type="project" value="UniProtKB-EC"/>
</dbReference>
<dbReference type="GO" id="GO:0090729">
    <property type="term" value="F:toxin activity"/>
    <property type="evidence" value="ECO:0007669"/>
    <property type="project" value="UniProtKB-KW"/>
</dbReference>
<dbReference type="GO" id="GO:0006952">
    <property type="term" value="P:defense response"/>
    <property type="evidence" value="ECO:0007669"/>
    <property type="project" value="UniProtKB-KW"/>
</dbReference>
<dbReference type="GO" id="GO:0017148">
    <property type="term" value="P:negative regulation of translation"/>
    <property type="evidence" value="ECO:0007669"/>
    <property type="project" value="UniProtKB-KW"/>
</dbReference>
<dbReference type="CDD" id="cd23480">
    <property type="entry name" value="beta-trefoil_Ricin-like_rpt1"/>
    <property type="match status" value="1"/>
</dbReference>
<dbReference type="CDD" id="cd23487">
    <property type="entry name" value="beta-trefoil_Ricin_like_rpt2"/>
    <property type="match status" value="1"/>
</dbReference>
<dbReference type="FunFam" id="2.80.10.50:FF:000076">
    <property type="entry name" value="Beta-galactoside-specific lectin 1"/>
    <property type="match status" value="1"/>
</dbReference>
<dbReference type="FunFam" id="2.80.10.50:FF:000079">
    <property type="entry name" value="Ricin"/>
    <property type="match status" value="1"/>
</dbReference>
<dbReference type="FunFam" id="3.40.420.10:FF:000001">
    <property type="entry name" value="Ricin"/>
    <property type="match status" value="1"/>
</dbReference>
<dbReference type="FunFam" id="4.10.470.10:FF:000001">
    <property type="entry name" value="Ricin"/>
    <property type="match status" value="1"/>
</dbReference>
<dbReference type="Gene3D" id="2.80.10.50">
    <property type="match status" value="2"/>
</dbReference>
<dbReference type="Gene3D" id="3.40.420.10">
    <property type="entry name" value="Ricin (A subunit), domain 1"/>
    <property type="match status" value="1"/>
</dbReference>
<dbReference type="Gene3D" id="4.10.470.10">
    <property type="entry name" value="Ricin (A Subunit), domain 2"/>
    <property type="match status" value="1"/>
</dbReference>
<dbReference type="InterPro" id="IPR036041">
    <property type="entry name" value="Ribosome-inact_prot_sf"/>
</dbReference>
<dbReference type="InterPro" id="IPR017989">
    <property type="entry name" value="Ribosome_inactivat_1/2"/>
</dbReference>
<dbReference type="InterPro" id="IPR001574">
    <property type="entry name" value="Ribosome_inactivat_prot"/>
</dbReference>
<dbReference type="InterPro" id="IPR017988">
    <property type="entry name" value="Ribosome_inactivat_prot_CS"/>
</dbReference>
<dbReference type="InterPro" id="IPR016138">
    <property type="entry name" value="Ribosome_inactivat_prot_sub1"/>
</dbReference>
<dbReference type="InterPro" id="IPR016139">
    <property type="entry name" value="Ribosome_inactivat_prot_sub2"/>
</dbReference>
<dbReference type="InterPro" id="IPR035992">
    <property type="entry name" value="Ricin_B-like_lectins"/>
</dbReference>
<dbReference type="InterPro" id="IPR000772">
    <property type="entry name" value="Ricin_B_lectin"/>
</dbReference>
<dbReference type="PANTHER" id="PTHR33453">
    <property type="match status" value="1"/>
</dbReference>
<dbReference type="PANTHER" id="PTHR33453:SF34">
    <property type="entry name" value="RIBOSOME-INACTIVATING PROTEIN"/>
    <property type="match status" value="1"/>
</dbReference>
<dbReference type="Pfam" id="PF00652">
    <property type="entry name" value="Ricin_B_lectin"/>
    <property type="match status" value="2"/>
</dbReference>
<dbReference type="Pfam" id="PF00161">
    <property type="entry name" value="RIP"/>
    <property type="match status" value="1"/>
</dbReference>
<dbReference type="PRINTS" id="PR00396">
    <property type="entry name" value="SHIGARICIN"/>
</dbReference>
<dbReference type="SMART" id="SM00458">
    <property type="entry name" value="RICIN"/>
    <property type="match status" value="2"/>
</dbReference>
<dbReference type="SUPFAM" id="SSF56371">
    <property type="entry name" value="Ribosome inactivating proteins (RIP)"/>
    <property type="match status" value="1"/>
</dbReference>
<dbReference type="SUPFAM" id="SSF50370">
    <property type="entry name" value="Ricin B-like lectins"/>
    <property type="match status" value="2"/>
</dbReference>
<dbReference type="PROSITE" id="PS50231">
    <property type="entry name" value="RICIN_B_LECTIN"/>
    <property type="match status" value="2"/>
</dbReference>
<dbReference type="PROSITE" id="PS00275">
    <property type="entry name" value="SHIGA_RICIN"/>
    <property type="match status" value="1"/>
</dbReference>
<reference key="1">
    <citation type="journal article" date="1985" name="J. Biol. Chem.">
        <title>The primary sequence of Ricinus communis agglutinin. Comparison with ricin.</title>
        <authorList>
            <person name="Roberts L.M."/>
            <person name="Lamb F.I."/>
            <person name="Pappin D.J.C."/>
            <person name="Lord J.M."/>
        </authorList>
    </citation>
    <scope>NUCLEOTIDE SEQUENCE [MRNA]</scope>
</reference>
<reference key="2">
    <citation type="journal article" date="1986" name="Biochim. Biophys. Acta">
        <title>The complete amino acid sequence of the B-chain of the Ricinus communis agglutinin isolated from large-grain castor bean seeds.</title>
        <authorList>
            <person name="Araki T."/>
            <person name="Yoshioka Y."/>
            <person name="Funatsu G."/>
        </authorList>
    </citation>
    <scope>PROTEIN SEQUENCE OF 303-564</scope>
    <source>
        <tissue>Seed</tissue>
    </source>
</reference>
<reference key="3">
    <citation type="journal article" date="1980" name="Eur. J. Biochem.">
        <title>Purification and physicochemical properties of ricins and agglutinins from Ricinus communis.</title>
        <authorList>
            <person name="Lin T.T.-S."/>
            <person name="Li S.S.-L."/>
        </authorList>
    </citation>
    <scope>PROTEIN SEQUENCE OF 303-337</scope>
</reference>
<reference key="4">
    <citation type="submission" date="2003-12" db="PDB data bank">
        <title>Structure-function investigation complex of agglutinin from Ricinus communis with galactose.</title>
        <authorList>
            <person name="Gabdoulkhakov A.G."/>
            <person name="Savochkina Y."/>
            <person name="Konareva N."/>
            <person name="Krauspenhaar R."/>
            <person name="Stoeva S."/>
            <person name="Nikonov S.V."/>
            <person name="Voelter W."/>
            <person name="Betzel C."/>
            <person name="Mikhailov A.M."/>
        </authorList>
    </citation>
    <scope>X-RAY CRYSTALLOGRAPHY (2.63 ANGSTROMS) OF 25-286 AND 303-564 IN COMPLEX WITH GALACTOSE</scope>
    <scope>DISULFIDE BONDS</scope>
</reference>